<reference key="1">
    <citation type="submission" date="2007-06" db="EMBL/GenBank/DDBJ databases">
        <title>Complete sequence of Marinomonas sp. MWYL1.</title>
        <authorList>
            <consortium name="US DOE Joint Genome Institute"/>
            <person name="Copeland A."/>
            <person name="Lucas S."/>
            <person name="Lapidus A."/>
            <person name="Barry K."/>
            <person name="Glavina del Rio T."/>
            <person name="Dalin E."/>
            <person name="Tice H."/>
            <person name="Pitluck S."/>
            <person name="Kiss H."/>
            <person name="Brettin T."/>
            <person name="Bruce D."/>
            <person name="Detter J.C."/>
            <person name="Han C."/>
            <person name="Schmutz J."/>
            <person name="Larimer F."/>
            <person name="Land M."/>
            <person name="Hauser L."/>
            <person name="Kyrpides N."/>
            <person name="Kim E."/>
            <person name="Johnston A.W.B."/>
            <person name="Todd J.D."/>
            <person name="Rogers R."/>
            <person name="Wexler M."/>
            <person name="Bond P.L."/>
            <person name="Li Y."/>
            <person name="Richardson P."/>
        </authorList>
    </citation>
    <scope>NUCLEOTIDE SEQUENCE [LARGE SCALE GENOMIC DNA]</scope>
    <source>
        <strain>MWYL1</strain>
    </source>
</reference>
<sequence length="190" mass="21354">MPKASEIKKNIAISYDNKTYIVKDIERSVPQGRAGGSLYRMRMYDVVTGRKLDETFKDSDMIDLADLVRRQVMFSYSDGDEFVFMDNEDYTPYSLNKSAIEEEILFVNEETVGIQVVLVNEVPVVIELPTNVELEVIETDPSIKGASATSRNKPAKLSTGAVIQVPEHISTGDRIKVNVEERKFAGRAEK</sequence>
<dbReference type="EMBL" id="CP000749">
    <property type="protein sequence ID" value="ABR70997.1"/>
    <property type="molecule type" value="Genomic_DNA"/>
</dbReference>
<dbReference type="SMR" id="A6VX18"/>
<dbReference type="STRING" id="400668.Mmwyl1_2075"/>
<dbReference type="KEGG" id="mmw:Mmwyl1_2075"/>
<dbReference type="eggNOG" id="COG0231">
    <property type="taxonomic scope" value="Bacteria"/>
</dbReference>
<dbReference type="HOGENOM" id="CLU_074944_2_0_6"/>
<dbReference type="OrthoDB" id="5599402at2"/>
<dbReference type="GO" id="GO:0005737">
    <property type="term" value="C:cytoplasm"/>
    <property type="evidence" value="ECO:0007669"/>
    <property type="project" value="InterPro"/>
</dbReference>
<dbReference type="GO" id="GO:0003746">
    <property type="term" value="F:translation elongation factor activity"/>
    <property type="evidence" value="ECO:0007669"/>
    <property type="project" value="UniProtKB-UniRule"/>
</dbReference>
<dbReference type="GO" id="GO:0043043">
    <property type="term" value="P:peptide biosynthetic process"/>
    <property type="evidence" value="ECO:0007669"/>
    <property type="project" value="InterPro"/>
</dbReference>
<dbReference type="CDD" id="cd05794">
    <property type="entry name" value="S1_EF-P_repeat_2"/>
    <property type="match status" value="1"/>
</dbReference>
<dbReference type="FunFam" id="2.40.50.140:FF:000004">
    <property type="entry name" value="Elongation factor P"/>
    <property type="match status" value="1"/>
</dbReference>
<dbReference type="Gene3D" id="2.30.30.30">
    <property type="match status" value="1"/>
</dbReference>
<dbReference type="Gene3D" id="2.40.50.140">
    <property type="entry name" value="Nucleic acid-binding proteins"/>
    <property type="match status" value="2"/>
</dbReference>
<dbReference type="HAMAP" id="MF_00646">
    <property type="entry name" value="EFP"/>
    <property type="match status" value="1"/>
</dbReference>
<dbReference type="InterPro" id="IPR015365">
    <property type="entry name" value="Elong-fact-P_C"/>
</dbReference>
<dbReference type="InterPro" id="IPR012340">
    <property type="entry name" value="NA-bd_OB-fold"/>
</dbReference>
<dbReference type="InterPro" id="IPR014722">
    <property type="entry name" value="Rib_uL2_dom2"/>
</dbReference>
<dbReference type="InterPro" id="IPR020599">
    <property type="entry name" value="Transl_elong_fac_P/YeiP"/>
</dbReference>
<dbReference type="InterPro" id="IPR013185">
    <property type="entry name" value="Transl_elong_KOW-like"/>
</dbReference>
<dbReference type="InterPro" id="IPR011897">
    <property type="entry name" value="Transl_elong_p-like_YeiP"/>
</dbReference>
<dbReference type="InterPro" id="IPR001059">
    <property type="entry name" value="Transl_elong_P/YeiP_cen"/>
</dbReference>
<dbReference type="InterPro" id="IPR013852">
    <property type="entry name" value="Transl_elong_P/YeiP_CS"/>
</dbReference>
<dbReference type="InterPro" id="IPR008991">
    <property type="entry name" value="Translation_prot_SH3-like_sf"/>
</dbReference>
<dbReference type="NCBIfam" id="NF001810">
    <property type="entry name" value="PRK00529.1"/>
    <property type="match status" value="1"/>
</dbReference>
<dbReference type="NCBIfam" id="NF003392">
    <property type="entry name" value="PRK04542.1"/>
    <property type="match status" value="1"/>
</dbReference>
<dbReference type="NCBIfam" id="TIGR02178">
    <property type="entry name" value="yeiP"/>
    <property type="match status" value="1"/>
</dbReference>
<dbReference type="PANTHER" id="PTHR30053">
    <property type="entry name" value="ELONGATION FACTOR P"/>
    <property type="match status" value="1"/>
</dbReference>
<dbReference type="PANTHER" id="PTHR30053:SF14">
    <property type="entry name" value="TRANSLATION ELONGATION FACTOR KOW-LIKE DOMAIN-CONTAINING PROTEIN"/>
    <property type="match status" value="1"/>
</dbReference>
<dbReference type="Pfam" id="PF01132">
    <property type="entry name" value="EFP"/>
    <property type="match status" value="1"/>
</dbReference>
<dbReference type="Pfam" id="PF08207">
    <property type="entry name" value="EFP_N"/>
    <property type="match status" value="1"/>
</dbReference>
<dbReference type="Pfam" id="PF09285">
    <property type="entry name" value="Elong-fact-P_C"/>
    <property type="match status" value="1"/>
</dbReference>
<dbReference type="PIRSF" id="PIRSF005901">
    <property type="entry name" value="EF-P"/>
    <property type="match status" value="1"/>
</dbReference>
<dbReference type="SMART" id="SM01185">
    <property type="entry name" value="EFP"/>
    <property type="match status" value="1"/>
</dbReference>
<dbReference type="SMART" id="SM00841">
    <property type="entry name" value="Elong-fact-P_C"/>
    <property type="match status" value="1"/>
</dbReference>
<dbReference type="SUPFAM" id="SSF50249">
    <property type="entry name" value="Nucleic acid-binding proteins"/>
    <property type="match status" value="2"/>
</dbReference>
<dbReference type="SUPFAM" id="SSF50104">
    <property type="entry name" value="Translation proteins SH3-like domain"/>
    <property type="match status" value="1"/>
</dbReference>
<dbReference type="PROSITE" id="PS01275">
    <property type="entry name" value="EFP"/>
    <property type="match status" value="1"/>
</dbReference>
<gene>
    <name type="ordered locus">Mmwyl1_2075</name>
</gene>
<proteinExistence type="inferred from homology"/>
<protein>
    <recommendedName>
        <fullName evidence="1">Elongation factor P-like protein</fullName>
    </recommendedName>
</protein>
<organism>
    <name type="scientific">Marinomonas sp. (strain MWYL1)</name>
    <dbReference type="NCBI Taxonomy" id="400668"/>
    <lineage>
        <taxon>Bacteria</taxon>
        <taxon>Pseudomonadati</taxon>
        <taxon>Pseudomonadota</taxon>
        <taxon>Gammaproteobacteria</taxon>
        <taxon>Oceanospirillales</taxon>
        <taxon>Oceanospirillaceae</taxon>
        <taxon>Marinomonas</taxon>
    </lineage>
</organism>
<feature type="chain" id="PRO_1000082714" description="Elongation factor P-like protein">
    <location>
        <begin position="1"/>
        <end position="190"/>
    </location>
</feature>
<evidence type="ECO:0000255" key="1">
    <source>
        <dbReference type="HAMAP-Rule" id="MF_00646"/>
    </source>
</evidence>
<comment type="similarity">
    <text evidence="1">Belongs to the elongation factor P family.</text>
</comment>
<accession>A6VX18</accession>
<name>EFPL_MARMS</name>